<keyword id="KW-0025">Alternative splicing</keyword>
<keyword id="KW-0067">ATP-binding</keyword>
<keyword id="KW-1003">Cell membrane</keyword>
<keyword id="KW-0968">Cytoplasmic vesicle</keyword>
<keyword id="KW-0967">Endosome</keyword>
<keyword id="KW-0325">Glycoprotein</keyword>
<keyword id="KW-0445">Lipid transport</keyword>
<keyword id="KW-0472">Membrane</keyword>
<keyword id="KW-0547">Nucleotide-binding</keyword>
<keyword id="KW-1267">Proteomics identification</keyword>
<keyword id="KW-1185">Reference proteome</keyword>
<keyword id="KW-1278">Translocase</keyword>
<keyword id="KW-0812">Transmembrane</keyword>
<keyword id="KW-1133">Transmembrane helix</keyword>
<keyword id="KW-0813">Transport</keyword>
<feature type="chain" id="PRO_0000093392" description="ATP-binding cassette sub-family G member 4">
    <location>
        <begin position="1"/>
        <end position="646"/>
    </location>
</feature>
<feature type="topological domain" description="Cytoplasmic" evidence="2">
    <location>
        <begin position="1"/>
        <end position="393"/>
    </location>
</feature>
<feature type="transmembrane region" description="Helical; Name=1" evidence="2">
    <location>
        <begin position="394"/>
        <end position="414"/>
    </location>
</feature>
<feature type="topological domain" description="Extracellular" evidence="2">
    <location>
        <begin position="415"/>
        <end position="425"/>
    </location>
</feature>
<feature type="transmembrane region" description="Helical; Name=2" evidence="2">
    <location>
        <begin position="426"/>
        <end position="446"/>
    </location>
</feature>
<feature type="topological domain" description="Cytoplasmic" evidence="2">
    <location>
        <begin position="447"/>
        <end position="472"/>
    </location>
</feature>
<feature type="transmembrane region" description="Helical; Name=3" evidence="2">
    <location>
        <begin position="473"/>
        <end position="493"/>
    </location>
</feature>
<feature type="topological domain" description="Extracellular" evidence="2">
    <location>
        <begin position="494"/>
        <end position="503"/>
    </location>
</feature>
<feature type="transmembrane region" description="Helical; Name=4" evidence="2">
    <location>
        <begin position="504"/>
        <end position="524"/>
    </location>
</feature>
<feature type="topological domain" description="Cytoplasmic" evidence="2">
    <location>
        <begin position="525"/>
        <end position="532"/>
    </location>
</feature>
<feature type="transmembrane region" description="Helical; Name=5" evidence="2">
    <location>
        <begin position="533"/>
        <end position="553"/>
    </location>
</feature>
<feature type="topological domain" description="Extracellular" evidence="2">
    <location>
        <begin position="554"/>
        <end position="617"/>
    </location>
</feature>
<feature type="transmembrane region" description="Helical; Name=6" evidence="2">
    <location>
        <begin position="618"/>
        <end position="638"/>
    </location>
</feature>
<feature type="topological domain" description="Cytoplasmic" evidence="2">
    <location>
        <begin position="639"/>
        <end position="646"/>
    </location>
</feature>
<feature type="domain" description="ABC transporter" evidence="3">
    <location>
        <begin position="61"/>
        <end position="301"/>
    </location>
</feature>
<feature type="domain" description="ABC transmembrane type-2">
    <location>
        <begin position="386"/>
        <end position="641"/>
    </location>
</feature>
<feature type="binding site" evidence="3">
    <location>
        <begin position="102"/>
        <end position="109"/>
    </location>
    <ligand>
        <name>ATP</name>
        <dbReference type="ChEBI" id="CHEBI:30616"/>
    </ligand>
</feature>
<feature type="glycosylation site" description="N-linked (GlcNAc...) asparagine" evidence="2">
    <location>
        <position position="422"/>
    </location>
</feature>
<feature type="splice variant" id="VSP_054266" description="In isoform 4." evidence="10">
    <location>
        <begin position="1"/>
        <end position="100"/>
    </location>
</feature>
<feature type="splice variant" id="VSP_054267" description="In isoform 2." evidence="10">
    <original>MAEKALEAVGCGLGPGAVAMAVTLEDGAEPPVLTTHLKKVENHITEAQRFSHLPKRSAVDIEFVELSYSVREGPCWRKR</original>
    <variation>MRDLELREVKQLARGHTA</variation>
    <location>
        <begin position="1"/>
        <end position="79"/>
    </location>
</feature>
<feature type="splice variant" id="VSP_054268" description="In isoform 3." evidence="10">
    <original>MAEKALEAVGCGLGPGAVAMAVTLEDGAEPPVLTTHLKKVENHITEAQRFSHLPKRSAVDIEFVELSYSVREGPCWRKR</original>
    <variation>MCGFSHAFQKRIVAS</variation>
    <location>
        <begin position="1"/>
        <end position="79"/>
    </location>
</feature>
<feature type="sequence variant" id="VAR_048141" description="In dbSNP:rs35060365.">
    <original>P</original>
    <variation>L</variation>
    <location>
        <position position="352"/>
    </location>
</feature>
<feature type="mutagenesis site" description="Abrogates ATPase activity. Induces a dominant-negative effect on ABCG1 ATP-activity. Does not affect subcellular localization." evidence="7 8">
    <original>K</original>
    <variation>M</variation>
    <location>
        <position position="108"/>
    </location>
</feature>
<sequence>MAEKALEAVGCGLGPGAVAMAVTLEDGAEPPVLTTHLKKVENHITEAQRFSHLPKRSAVDIEFVELSYSVREGPCWRKRGYKTLLKCLSGKFCRRELIGIMGPSGAGKSTFMNILAGYRESGMKGQILVNGRPRELRTFRKMSCYIMQDDMLLPHLTVLEAMMVSANLKLSEKQEVKKELVTEILTALGLMSCSHTRTALLSGGQRKRLAIALELVNNPPVMFFDEPTSGLDSASCFQVVSLMKSLAQGGRTIICTIHQPSAKLFEMFDKLYILSQGQCIFKGVVTNLIPYLKGLGLHCPTYHNPADFIIEVASGEYGDLNPMLFRAVQNGLCAMAEKKSSPEKNEVPAPCPPCPPEVDPIESHTFATSTLTQFCILFKRTFLSILRDTVLTHLRFMSHVVIGVLIGLLYLHIGDDASKVFNNTGCLFFSMLFLMFAALMPTVLTFPLEMAVFMREHLNYWYSLKAYYLAKTMADVPFQVVCPVVYCSIVYWMTGQPAETSRFLLFSALATATALVAQSLGLLIGAASNSLQVATFVGPVTAIPVLLFSGFFVSFKTIPTYLQWSSYLSYVRYGFEGVILTIYGMERGDLTCLEERCPFREPQSILRALDVEDAKLYMDFLVLGIFFLALRLLAYLVLRYRVKSER</sequence>
<comment type="function">
    <text evidence="1 7 8 9">ATP-dependent transporter of the ATP-binding cassette (ABC) family that may be involved in the cellular efflux of sterols, in particular cholesterol and desmosterol (a cholesterol precursor), to high-density lipoprotein (HDL) (PubMed:15240127, PubMed:33141061). May play an important role in the removal of amyloid-beta peptides from brain, in a process that can be antagonized by desmosterol. However it is unclear whether ABCG4 can directly transport amyloid-beta peptides or whether peptide export may be facilitated due to changes in the membrane lipid environment (By similarity). Induces apoptosis in various cells (PubMed:27228027).</text>
</comment>
<comment type="catalytic activity">
    <reaction evidence="9">
        <text>cholesterol(in) + ATP + H2O = cholesterol(out) + ADP + phosphate + H(+)</text>
        <dbReference type="Rhea" id="RHEA:39051"/>
        <dbReference type="ChEBI" id="CHEBI:15377"/>
        <dbReference type="ChEBI" id="CHEBI:15378"/>
        <dbReference type="ChEBI" id="CHEBI:16113"/>
        <dbReference type="ChEBI" id="CHEBI:30616"/>
        <dbReference type="ChEBI" id="CHEBI:43474"/>
        <dbReference type="ChEBI" id="CHEBI:456216"/>
    </reaction>
    <physiologicalReaction direction="left-to-right" evidence="13">
        <dbReference type="Rhea" id="RHEA:39052"/>
    </physiologicalReaction>
</comment>
<comment type="catalytic activity">
    <reaction evidence="1">
        <text>desmosterol(in) + ATP + H2O = desmosterol(out) + ADP + phosphate + H(+)</text>
        <dbReference type="Rhea" id="RHEA:67932"/>
        <dbReference type="ChEBI" id="CHEBI:15377"/>
        <dbReference type="ChEBI" id="CHEBI:15378"/>
        <dbReference type="ChEBI" id="CHEBI:17737"/>
        <dbReference type="ChEBI" id="CHEBI:30616"/>
        <dbReference type="ChEBI" id="CHEBI:43474"/>
        <dbReference type="ChEBI" id="CHEBI:456216"/>
    </reaction>
    <physiologicalReaction direction="left-to-right" evidence="1">
        <dbReference type="Rhea" id="RHEA:67933"/>
    </physiologicalReaction>
</comment>
<comment type="subunit">
    <text evidence="8 12">Half-transporter that forms a functional transporter via homo- or heterodimerization. Homodimer (PubMed:27228027). Heterodimers with ABCG1 (Probable) (PubMed:27228027).</text>
</comment>
<comment type="interaction">
    <interactant intactId="EBI-8584118">
        <id>Q9H172</id>
    </interactant>
    <interactant intactId="EBI-8584087">
        <id>P45844-4</id>
        <label>ABCG1</label>
    </interactant>
    <organismsDiffer>false</organismsDiffer>
    <experiments>2</experiments>
</comment>
<comment type="interaction">
    <interactant intactId="EBI-8584118">
        <id>Q9H172</id>
    </interactant>
    <interactant intactId="EBI-13345167">
        <id>Q8TDT2</id>
        <label>GPR152</label>
    </interactant>
    <organismsDiffer>false</organismsDiffer>
    <experiments>3</experiments>
</comment>
<comment type="interaction">
    <interactant intactId="EBI-8584118">
        <id>Q9H172</id>
    </interactant>
    <interactant intactId="EBI-742388">
        <id>Q9H8W4</id>
        <label>PLEKHF2</label>
    </interactant>
    <organismsDiffer>false</organismsDiffer>
    <experiments>3</experiments>
</comment>
<comment type="interaction">
    <interactant intactId="EBI-8584118">
        <id>Q9H172</id>
    </interactant>
    <interactant intactId="EBI-744081">
        <id>Q96EQ0</id>
        <label>SGTB</label>
    </interactant>
    <organismsDiffer>false</organismsDiffer>
    <experiments>3</experiments>
</comment>
<comment type="interaction">
    <interactant intactId="EBI-8584118">
        <id>Q9H172</id>
    </interactant>
    <interactant intactId="EBI-12903814">
        <id>O95807</id>
        <label>TMEM50A</label>
    </interactant>
    <organismsDiffer>false</organismsDiffer>
    <experiments>3</experiments>
</comment>
<comment type="interaction">
    <interactant intactId="EBI-8584118">
        <id>Q9H172</id>
    </interactant>
    <interactant intactId="EBI-720609">
        <id>O76024</id>
        <label>WFS1</label>
    </interactant>
    <organismsDiffer>false</organismsDiffer>
    <experiments>3</experiments>
</comment>
<comment type="subcellular location">
    <subcellularLocation>
        <location evidence="8">Cell membrane</location>
        <topology evidence="2">Multi-pass membrane protein</topology>
    </subcellularLocation>
    <subcellularLocation>
        <location evidence="1">Cytoplasmic vesicle membrane</location>
        <topology evidence="2">Multi-pass membrane protein</topology>
    </subcellularLocation>
    <subcellularLocation>
        <location evidence="1">Endosome membrane</location>
        <topology evidence="2">Multi-pass membrane protein</topology>
    </subcellularLocation>
</comment>
<comment type="alternative products">
    <event type="alternative splicing"/>
    <isoform>
        <id>Q9H172-1</id>
        <name>1</name>
        <name>B</name>
        <sequence type="displayed"/>
    </isoform>
    <isoform>
        <id>Q9H172-2</id>
        <name>2</name>
        <name>T3</name>
        <name>T4</name>
        <sequence type="described" ref="VSP_054267"/>
    </isoform>
    <isoform>
        <id>Q9H172-3</id>
        <name>3</name>
        <name>M</name>
        <name>T1</name>
        <sequence type="described" ref="VSP_054268"/>
    </isoform>
    <isoform>
        <id>Q9H172-4</id>
        <name>4</name>
        <name>T2</name>
        <sequence type="described" ref="VSP_054266"/>
    </isoform>
</comment>
<comment type="tissue specificity">
    <text evidence="5 6">Expressed specifically in the brain and the eye.</text>
</comment>
<comment type="induction">
    <text evidence="9">Protein expression is stabilized by cellular cholesterol status and cholesterol synthesis intermediates desmosterol, lathosterol and lanosterol.</text>
</comment>
<comment type="miscellaneous">
    <text evidence="1 4 9">Whether ABCG4 is an LXR target gene, is still under debate. Studies performed in monocytes, and in one astrocyte cell line indicated that ABCG4 expression could be up-regulated by oxysterols and other LXR ligands (PubMed:11606068, PubMed:33141061). However, subsequent observations in a number of different cell types (primary mouse cells, oligodendrocytes and neuron-like cell lines) have not confirmed this observation (By similarity) (PubMed:33141061).</text>
</comment>
<comment type="similarity">
    <text evidence="11">Belongs to the ABC transporter superfamily. ABCG family. Eye pigment precursor importer (TC 3.A.1.204) subfamily.</text>
</comment>
<comment type="online information" name="ABCMdb">
    <link uri="http://abcm2.hegelab.org/search"/>
    <text>Database for mutations in ABC proteins</text>
</comment>
<gene>
    <name evidence="14" type="primary">ABCG4</name>
    <name type="synonym">WHITE2</name>
</gene>
<protein>
    <recommendedName>
        <fullName>ATP-binding cassette sub-family G member 4</fullName>
        <ecNumber evidence="7 9">7.6.2.-</ecNumber>
    </recommendedName>
</protein>
<proteinExistence type="evidence at protein level"/>
<reference key="1">
    <citation type="journal article" date="2001" name="Biochem. Biophys. Res. Commun.">
        <title>The human ABCG4 gene is regulated by oxysterols and retinoids in monocyte-derived macrophages.</title>
        <authorList>
            <person name="Engel T."/>
            <person name="Lorkowski S."/>
            <person name="Lueken A."/>
            <person name="Rust S."/>
            <person name="Schlueter B."/>
            <person name="Berger G."/>
            <person name="Cullen P."/>
            <person name="Assmann G."/>
        </authorList>
    </citation>
    <scope>NUCLEOTIDE SEQUENCE [MRNA] (ISOFORM 1)</scope>
    <scope>MISCELLANEOUS</scope>
</reference>
<reference key="2">
    <citation type="journal article" date="2004" name="Nat. Genet.">
        <title>Complete sequencing and characterization of 21,243 full-length human cDNAs.</title>
        <authorList>
            <person name="Ota T."/>
            <person name="Suzuki Y."/>
            <person name="Nishikawa T."/>
            <person name="Otsuki T."/>
            <person name="Sugiyama T."/>
            <person name="Irie R."/>
            <person name="Wakamatsu A."/>
            <person name="Hayashi K."/>
            <person name="Sato H."/>
            <person name="Nagai K."/>
            <person name="Kimura K."/>
            <person name="Makita H."/>
            <person name="Sekine M."/>
            <person name="Obayashi M."/>
            <person name="Nishi T."/>
            <person name="Shibahara T."/>
            <person name="Tanaka T."/>
            <person name="Ishii S."/>
            <person name="Yamamoto J."/>
            <person name="Saito K."/>
            <person name="Kawai Y."/>
            <person name="Isono Y."/>
            <person name="Nakamura Y."/>
            <person name="Nagahari K."/>
            <person name="Murakami K."/>
            <person name="Yasuda T."/>
            <person name="Iwayanagi T."/>
            <person name="Wagatsuma M."/>
            <person name="Shiratori A."/>
            <person name="Sudo H."/>
            <person name="Hosoiri T."/>
            <person name="Kaku Y."/>
            <person name="Kodaira H."/>
            <person name="Kondo H."/>
            <person name="Sugawara M."/>
            <person name="Takahashi M."/>
            <person name="Kanda K."/>
            <person name="Yokoi T."/>
            <person name="Furuya T."/>
            <person name="Kikkawa E."/>
            <person name="Omura Y."/>
            <person name="Abe K."/>
            <person name="Kamihara K."/>
            <person name="Katsuta N."/>
            <person name="Sato K."/>
            <person name="Tanikawa M."/>
            <person name="Yamazaki M."/>
            <person name="Ninomiya K."/>
            <person name="Ishibashi T."/>
            <person name="Yamashita H."/>
            <person name="Murakawa K."/>
            <person name="Fujimori K."/>
            <person name="Tanai H."/>
            <person name="Kimata M."/>
            <person name="Watanabe M."/>
            <person name="Hiraoka S."/>
            <person name="Chiba Y."/>
            <person name="Ishida S."/>
            <person name="Ono Y."/>
            <person name="Takiguchi S."/>
            <person name="Watanabe S."/>
            <person name="Yosida M."/>
            <person name="Hotuta T."/>
            <person name="Kusano J."/>
            <person name="Kanehori K."/>
            <person name="Takahashi-Fujii A."/>
            <person name="Hara H."/>
            <person name="Tanase T.-O."/>
            <person name="Nomura Y."/>
            <person name="Togiya S."/>
            <person name="Komai F."/>
            <person name="Hara R."/>
            <person name="Takeuchi K."/>
            <person name="Arita M."/>
            <person name="Imose N."/>
            <person name="Musashino K."/>
            <person name="Yuuki H."/>
            <person name="Oshima A."/>
            <person name="Sasaki N."/>
            <person name="Aotsuka S."/>
            <person name="Yoshikawa Y."/>
            <person name="Matsunawa H."/>
            <person name="Ichihara T."/>
            <person name="Shiohata N."/>
            <person name="Sano S."/>
            <person name="Moriya S."/>
            <person name="Momiyama H."/>
            <person name="Satoh N."/>
            <person name="Takami S."/>
            <person name="Terashima Y."/>
            <person name="Suzuki O."/>
            <person name="Nakagawa S."/>
            <person name="Senoh A."/>
            <person name="Mizoguchi H."/>
            <person name="Goto Y."/>
            <person name="Shimizu F."/>
            <person name="Wakebe H."/>
            <person name="Hishigaki H."/>
            <person name="Watanabe T."/>
            <person name="Sugiyama A."/>
            <person name="Takemoto M."/>
            <person name="Kawakami B."/>
            <person name="Yamazaki M."/>
            <person name="Watanabe K."/>
            <person name="Kumagai A."/>
            <person name="Itakura S."/>
            <person name="Fukuzumi Y."/>
            <person name="Fujimori Y."/>
            <person name="Komiyama M."/>
            <person name="Tashiro H."/>
            <person name="Tanigami A."/>
            <person name="Fujiwara T."/>
            <person name="Ono T."/>
            <person name="Yamada K."/>
            <person name="Fujii Y."/>
            <person name="Ozaki K."/>
            <person name="Hirao M."/>
            <person name="Ohmori Y."/>
            <person name="Kawabata A."/>
            <person name="Hikiji T."/>
            <person name="Kobatake N."/>
            <person name="Inagaki H."/>
            <person name="Ikema Y."/>
            <person name="Okamoto S."/>
            <person name="Okitani R."/>
            <person name="Kawakami T."/>
            <person name="Noguchi S."/>
            <person name="Itoh T."/>
            <person name="Shigeta K."/>
            <person name="Senba T."/>
            <person name="Matsumura K."/>
            <person name="Nakajima Y."/>
            <person name="Mizuno T."/>
            <person name="Morinaga M."/>
            <person name="Sasaki M."/>
            <person name="Togashi T."/>
            <person name="Oyama M."/>
            <person name="Hata H."/>
            <person name="Watanabe M."/>
            <person name="Komatsu T."/>
            <person name="Mizushima-Sugano J."/>
            <person name="Satoh T."/>
            <person name="Shirai Y."/>
            <person name="Takahashi Y."/>
            <person name="Nakagawa K."/>
            <person name="Okumura K."/>
            <person name="Nagase T."/>
            <person name="Nomura N."/>
            <person name="Kikuchi H."/>
            <person name="Masuho Y."/>
            <person name="Yamashita R."/>
            <person name="Nakai K."/>
            <person name="Yada T."/>
            <person name="Nakamura Y."/>
            <person name="Ohara O."/>
            <person name="Isogai T."/>
            <person name="Sugano S."/>
        </authorList>
    </citation>
    <scope>NUCLEOTIDE SEQUENCE [LARGE SCALE MRNA] (ISOFORM 1)</scope>
    <source>
        <tissue>Brain</tissue>
        <tissue>Hippocampus</tissue>
    </source>
</reference>
<reference key="3">
    <citation type="submission" date="2005-07" db="EMBL/GenBank/DDBJ databases">
        <authorList>
            <person name="Mural R.J."/>
            <person name="Istrail S."/>
            <person name="Sutton G.G."/>
            <person name="Florea L."/>
            <person name="Halpern A.L."/>
            <person name="Mobarry C.M."/>
            <person name="Lippert R."/>
            <person name="Walenz B."/>
            <person name="Shatkay H."/>
            <person name="Dew I."/>
            <person name="Miller J.R."/>
            <person name="Flanigan M.J."/>
            <person name="Edwards N.J."/>
            <person name="Bolanos R."/>
            <person name="Fasulo D."/>
            <person name="Halldorsson B.V."/>
            <person name="Hannenhalli S."/>
            <person name="Turner R."/>
            <person name="Yooseph S."/>
            <person name="Lu F."/>
            <person name="Nusskern D.R."/>
            <person name="Shue B.C."/>
            <person name="Zheng X.H."/>
            <person name="Zhong F."/>
            <person name="Delcher A.L."/>
            <person name="Huson D.H."/>
            <person name="Kravitz S.A."/>
            <person name="Mouchard L."/>
            <person name="Reinert K."/>
            <person name="Remington K.A."/>
            <person name="Clark A.G."/>
            <person name="Waterman M.S."/>
            <person name="Eichler E.E."/>
            <person name="Adams M.D."/>
            <person name="Hunkapiller M.W."/>
            <person name="Myers E.W."/>
            <person name="Venter J.C."/>
        </authorList>
    </citation>
    <scope>NUCLEOTIDE SEQUENCE [LARGE SCALE GENOMIC DNA]</scope>
</reference>
<reference key="4">
    <citation type="journal article" date="2004" name="Genome Res.">
        <title>The status, quality, and expansion of the NIH full-length cDNA project: the Mammalian Gene Collection (MGC).</title>
        <authorList>
            <consortium name="The MGC Project Team"/>
        </authorList>
    </citation>
    <scope>NUCLEOTIDE SEQUENCE [LARGE SCALE MRNA] (ISOFORM 1)</scope>
    <source>
        <tissue>Brain</tissue>
    </source>
</reference>
<reference key="5">
    <citation type="journal article" date="2001" name="Cytogenet. Cell Genet.">
        <title>Human and mouse orthologs of a new ATP-binding cassette gene, ABCG4.</title>
        <authorList>
            <person name="Annilo T."/>
            <person name="Tammur J."/>
            <person name="Hutchinson A."/>
            <person name="Rzhetsky A."/>
            <person name="Dean M."/>
            <person name="Allikmets R."/>
        </authorList>
    </citation>
    <scope>NUCLEOTIDE SEQUENCE [MRNA] OF 1-118 (ISOFORMS 2; 3 AND 4)</scope>
    <scope>ALTERNATIVE SPLICING</scope>
    <scope>TISSUE SPECIFICITY</scope>
    <source>
        <tissue>Lung</tissue>
    </source>
</reference>
<reference key="6">
    <citation type="journal article" date="2002" name="Biochim. Biophys. Acta">
        <title>ABCG4: a novel human white family ABC-transporter expressed in the brain and eye.</title>
        <authorList>
            <person name="Oldfield S."/>
            <person name="Lowry C."/>
            <person name="Ruddick J."/>
            <person name="Lightman S."/>
        </authorList>
    </citation>
    <scope>NUCLEOTIDE SEQUENCE [MRNA] OF 20-646 (ISOFORM 1)</scope>
    <scope>TISSUE SPECIFICITY</scope>
    <source>
        <tissue>Spinal ganglion</tissue>
    </source>
</reference>
<reference key="7">
    <citation type="journal article" date="2004" name="Biochem. Biophys. Res. Commun.">
        <title>Functional expression and characterization of the human ABCG1 and ABCG4 proteins: indications for heterodimerization.</title>
        <authorList>
            <person name="Cserepes J."/>
            <person name="Szentpetery Z."/>
            <person name="Seres L."/>
            <person name="Ozvegy-Laczka C."/>
            <person name="Langmann T."/>
            <person name="Schmitz G."/>
            <person name="Glavinas H."/>
            <person name="Klein I."/>
            <person name="Homolya L."/>
            <person name="Varadi A."/>
            <person name="Sarkadi B."/>
            <person name="Elkind N.B."/>
        </authorList>
    </citation>
    <scope>SUBUNIT</scope>
    <scope>FUNCTION</scope>
    <scope>CATALYTIC ACTIVITY</scope>
    <scope>MUTAGENESIS OF LYS-108</scope>
</reference>
<reference key="8">
    <citation type="journal article" date="2016" name="PLoS ONE">
        <title>Functional Cooperativity between ABCG4 and ABCG1 Isoforms.</title>
        <authorList>
            <person name="Hegyi Z."/>
            <person name="Homolya L."/>
        </authorList>
    </citation>
    <scope>SUBUNIT</scope>
    <scope>SUBCELLULAR LOCATION</scope>
    <scope>MUTAGENESIS OF LYS-108</scope>
    <scope>FUNCTION</scope>
    <scope>INTERACTION WITH ABCG1</scope>
</reference>
<reference key="9">
    <citation type="journal article" date="2021" name="Biochim. Biophys. Acta">
        <title>Regulation of ABCG4 transporter expression by sterols and LXR ligands.</title>
        <authorList>
            <person name="Yang A."/>
            <person name="Alrosan A.Z."/>
            <person name="Sharpe L.J."/>
            <person name="Brown A.J."/>
            <person name="Callaghan R."/>
            <person name="Gelissen I.C."/>
        </authorList>
    </citation>
    <scope>INDUCTION</scope>
    <scope>CATALYTIC ACTIVITY</scope>
    <scope>FUNCTION</scope>
</reference>
<organism>
    <name type="scientific">Homo sapiens</name>
    <name type="common">Human</name>
    <dbReference type="NCBI Taxonomy" id="9606"/>
    <lineage>
        <taxon>Eukaryota</taxon>
        <taxon>Metazoa</taxon>
        <taxon>Chordata</taxon>
        <taxon>Craniata</taxon>
        <taxon>Vertebrata</taxon>
        <taxon>Euteleostomi</taxon>
        <taxon>Mammalia</taxon>
        <taxon>Eutheria</taxon>
        <taxon>Euarchontoglires</taxon>
        <taxon>Primates</taxon>
        <taxon>Haplorrhini</taxon>
        <taxon>Catarrhini</taxon>
        <taxon>Hominidae</taxon>
        <taxon>Homo</taxon>
    </lineage>
</organism>
<dbReference type="EC" id="7.6.2.-" evidence="7 9"/>
<dbReference type="EMBL" id="AJ308237">
    <property type="protein sequence ID" value="CAC87131.1"/>
    <property type="molecule type" value="mRNA"/>
</dbReference>
<dbReference type="EMBL" id="AK289830">
    <property type="protein sequence ID" value="BAF82519.1"/>
    <property type="molecule type" value="mRNA"/>
</dbReference>
<dbReference type="EMBL" id="AK290035">
    <property type="protein sequence ID" value="BAF82724.1"/>
    <property type="molecule type" value="mRNA"/>
</dbReference>
<dbReference type="EMBL" id="CH471065">
    <property type="protein sequence ID" value="EAW67464.1"/>
    <property type="molecule type" value="Genomic_DNA"/>
</dbReference>
<dbReference type="EMBL" id="CH471065">
    <property type="protein sequence ID" value="EAW67465.1"/>
    <property type="molecule type" value="Genomic_DNA"/>
</dbReference>
<dbReference type="EMBL" id="CH471065">
    <property type="protein sequence ID" value="EAW67466.1"/>
    <property type="molecule type" value="Genomic_DNA"/>
</dbReference>
<dbReference type="EMBL" id="BC041091">
    <property type="protein sequence ID" value="AAH41091.1"/>
    <property type="molecule type" value="mRNA"/>
</dbReference>
<dbReference type="EMBL" id="AY055472">
    <property type="protein sequence ID" value="AAL16400.1"/>
    <property type="molecule type" value="Genomic_DNA"/>
</dbReference>
<dbReference type="EMBL" id="AY055472">
    <property type="protein sequence ID" value="AAL16401.1"/>
    <property type="molecule type" value="Genomic_DNA"/>
</dbReference>
<dbReference type="EMBL" id="AY055472">
    <property type="protein sequence ID" value="AAL16402.1"/>
    <property type="molecule type" value="Genomic_DNA"/>
</dbReference>
<dbReference type="EMBL" id="AJ300465">
    <property type="protein sequence ID" value="CAC17140.1"/>
    <property type="molecule type" value="mRNA"/>
</dbReference>
<dbReference type="CCDS" id="CCDS8415.1">
    <molecule id="Q9H172-1"/>
</dbReference>
<dbReference type="PIR" id="JC7777">
    <property type="entry name" value="JC7777"/>
</dbReference>
<dbReference type="RefSeq" id="NP_001135977.1">
    <molecule id="Q9H172-1"/>
    <property type="nucleotide sequence ID" value="NM_001142505.1"/>
</dbReference>
<dbReference type="RefSeq" id="NP_001335120.1">
    <molecule id="Q9H172-1"/>
    <property type="nucleotide sequence ID" value="NM_001348191.2"/>
</dbReference>
<dbReference type="RefSeq" id="NP_001335121.1">
    <molecule id="Q9H172-2"/>
    <property type="nucleotide sequence ID" value="NM_001348192.2"/>
</dbReference>
<dbReference type="RefSeq" id="NP_071452.2">
    <molecule id="Q9H172-1"/>
    <property type="nucleotide sequence ID" value="NM_022169.4"/>
</dbReference>
<dbReference type="RefSeq" id="XP_011541254.1">
    <molecule id="Q9H172-3"/>
    <property type="nucleotide sequence ID" value="XM_011542952.3"/>
</dbReference>
<dbReference type="RefSeq" id="XP_054225605.1">
    <molecule id="Q9H172-3"/>
    <property type="nucleotide sequence ID" value="XM_054369630.1"/>
</dbReference>
<dbReference type="SMR" id="Q9H172"/>
<dbReference type="BioGRID" id="122083">
    <property type="interactions" value="7"/>
</dbReference>
<dbReference type="FunCoup" id="Q9H172">
    <property type="interactions" value="749"/>
</dbReference>
<dbReference type="IntAct" id="Q9H172">
    <property type="interactions" value="7"/>
</dbReference>
<dbReference type="MINT" id="Q9H172"/>
<dbReference type="STRING" id="9606.ENSP00000481728"/>
<dbReference type="TCDB" id="3.A.1.204.20">
    <property type="family name" value="the atp-binding cassette (abc) superfamily"/>
</dbReference>
<dbReference type="GlyCosmos" id="Q9H172">
    <property type="glycosylation" value="1 site, No reported glycans"/>
</dbReference>
<dbReference type="GlyGen" id="Q9H172">
    <property type="glycosylation" value="1 site"/>
</dbReference>
<dbReference type="iPTMnet" id="Q9H172"/>
<dbReference type="PhosphoSitePlus" id="Q9H172"/>
<dbReference type="BioMuta" id="ABCG4"/>
<dbReference type="DMDM" id="17432915"/>
<dbReference type="MassIVE" id="Q9H172"/>
<dbReference type="PaxDb" id="9606-ENSP00000481728"/>
<dbReference type="PeptideAtlas" id="Q9H172"/>
<dbReference type="ProteomicsDB" id="80375">
    <molecule id="Q9H172-1"/>
</dbReference>
<dbReference type="Antibodypedia" id="32624">
    <property type="antibodies" value="195 antibodies from 31 providers"/>
</dbReference>
<dbReference type="DNASU" id="64137"/>
<dbReference type="Ensembl" id="ENST00000615496.4">
    <molecule id="Q9H172-1"/>
    <property type="protein sequence ID" value="ENSP00000479253.1"/>
    <property type="gene ID" value="ENSG00000172350.10"/>
</dbReference>
<dbReference type="Ensembl" id="ENST00000619701.5">
    <molecule id="Q9H172-1"/>
    <property type="protein sequence ID" value="ENSP00000481728.1"/>
    <property type="gene ID" value="ENSG00000172350.10"/>
</dbReference>
<dbReference type="Ensembl" id="ENST00000622721.1">
    <molecule id="Q9H172-1"/>
    <property type="protein sequence ID" value="ENSP00000484289.1"/>
    <property type="gene ID" value="ENSG00000172350.10"/>
</dbReference>
<dbReference type="GeneID" id="64137"/>
<dbReference type="KEGG" id="hsa:64137"/>
<dbReference type="MANE-Select" id="ENST00000619701.5">
    <property type="protein sequence ID" value="ENSP00000481728.1"/>
    <property type="RefSeq nucleotide sequence ID" value="NM_022169.5"/>
    <property type="RefSeq protein sequence ID" value="NP_071452.2"/>
</dbReference>
<dbReference type="UCSC" id="uc031yhk.2">
    <molecule id="Q9H172-1"/>
    <property type="organism name" value="human"/>
</dbReference>
<dbReference type="AGR" id="HGNC:13884"/>
<dbReference type="CTD" id="64137"/>
<dbReference type="DisGeNET" id="64137"/>
<dbReference type="GeneCards" id="ABCG4"/>
<dbReference type="HGNC" id="HGNC:13884">
    <property type="gene designation" value="ABCG4"/>
</dbReference>
<dbReference type="HPA" id="ENSG00000172350">
    <property type="expression patterns" value="Group enriched (brain, retina)"/>
</dbReference>
<dbReference type="MalaCards" id="ABCG4"/>
<dbReference type="MIM" id="607784">
    <property type="type" value="gene"/>
</dbReference>
<dbReference type="neXtProt" id="NX_Q9H172"/>
<dbReference type="OpenTargets" id="ENSG00000172350"/>
<dbReference type="PharmGKB" id="PA24410"/>
<dbReference type="VEuPathDB" id="HostDB:ENSG00000172350"/>
<dbReference type="eggNOG" id="KOG0061">
    <property type="taxonomic scope" value="Eukaryota"/>
</dbReference>
<dbReference type="GeneTree" id="ENSGT00940000157853"/>
<dbReference type="HOGENOM" id="CLU_000604_57_6_1"/>
<dbReference type="InParanoid" id="Q9H172"/>
<dbReference type="OMA" id="WIDVCIM"/>
<dbReference type="OrthoDB" id="66620at2759"/>
<dbReference type="PAN-GO" id="Q9H172">
    <property type="GO annotations" value="5 GO annotations based on evolutionary models"/>
</dbReference>
<dbReference type="PhylomeDB" id="Q9H172"/>
<dbReference type="TreeFam" id="TF105210"/>
<dbReference type="PathwayCommons" id="Q9H172"/>
<dbReference type="Reactome" id="R-HSA-1369062">
    <property type="pathway name" value="ABC transporters in lipid homeostasis"/>
</dbReference>
<dbReference type="SignaLink" id="Q9H172"/>
<dbReference type="BioGRID-ORCS" id="64137">
    <property type="hits" value="9 hits in 1150 CRISPR screens"/>
</dbReference>
<dbReference type="GeneWiki" id="ABCG4"/>
<dbReference type="GenomeRNAi" id="64137"/>
<dbReference type="Pharos" id="Q9H172">
    <property type="development level" value="Tbio"/>
</dbReference>
<dbReference type="PRO" id="PR:Q9H172"/>
<dbReference type="Proteomes" id="UP000005640">
    <property type="component" value="Chromosome 11"/>
</dbReference>
<dbReference type="RNAct" id="Q9H172">
    <property type="molecule type" value="protein"/>
</dbReference>
<dbReference type="Bgee" id="ENSG00000172350">
    <property type="expression patterns" value="Expressed in right hemisphere of cerebellum and 140 other cell types or tissues"/>
</dbReference>
<dbReference type="ExpressionAtlas" id="Q9H172">
    <property type="expression patterns" value="baseline and differential"/>
</dbReference>
<dbReference type="GO" id="GO:0031410">
    <property type="term" value="C:cytoplasmic vesicle"/>
    <property type="evidence" value="ECO:0000250"/>
    <property type="project" value="UniProtKB"/>
</dbReference>
<dbReference type="GO" id="GO:0010008">
    <property type="term" value="C:endosome membrane"/>
    <property type="evidence" value="ECO:0000250"/>
    <property type="project" value="UniProtKB"/>
</dbReference>
<dbReference type="GO" id="GO:0005886">
    <property type="term" value="C:plasma membrane"/>
    <property type="evidence" value="ECO:0000314"/>
    <property type="project" value="UniProtKB"/>
</dbReference>
<dbReference type="GO" id="GO:0034041">
    <property type="term" value="F:ABC-type sterol transporter activity"/>
    <property type="evidence" value="ECO:0000318"/>
    <property type="project" value="GO_Central"/>
</dbReference>
<dbReference type="GO" id="GO:0005524">
    <property type="term" value="F:ATP binding"/>
    <property type="evidence" value="ECO:0007669"/>
    <property type="project" value="UniProtKB-KW"/>
</dbReference>
<dbReference type="GO" id="GO:0016887">
    <property type="term" value="F:ATP hydrolysis activity"/>
    <property type="evidence" value="ECO:0000314"/>
    <property type="project" value="UniProtKB"/>
</dbReference>
<dbReference type="GO" id="GO:0042802">
    <property type="term" value="F:identical protein binding"/>
    <property type="evidence" value="ECO:0000314"/>
    <property type="project" value="UniProtKB"/>
</dbReference>
<dbReference type="GO" id="GO:0046982">
    <property type="term" value="F:protein heterodimerization activity"/>
    <property type="evidence" value="ECO:0000314"/>
    <property type="project" value="UniProtKB"/>
</dbReference>
<dbReference type="GO" id="GO:0042803">
    <property type="term" value="F:protein homodimerization activity"/>
    <property type="evidence" value="ECO:0000314"/>
    <property type="project" value="BHF-UCL"/>
</dbReference>
<dbReference type="GO" id="GO:0071403">
    <property type="term" value="P:cellular response to high density lipoprotein particle stimulus"/>
    <property type="evidence" value="ECO:0007669"/>
    <property type="project" value="Ensembl"/>
</dbReference>
<dbReference type="GO" id="GO:1990830">
    <property type="term" value="P:cellular response to leukemia inhibitory factor"/>
    <property type="evidence" value="ECO:0007669"/>
    <property type="project" value="Ensembl"/>
</dbReference>
<dbReference type="GO" id="GO:0033344">
    <property type="term" value="P:cholesterol efflux"/>
    <property type="evidence" value="ECO:0000315"/>
    <property type="project" value="UniProtKB"/>
</dbReference>
<dbReference type="GO" id="GO:0042632">
    <property type="term" value="P:cholesterol homeostasis"/>
    <property type="evidence" value="ECO:0000250"/>
    <property type="project" value="UniProtKB"/>
</dbReference>
<dbReference type="GO" id="GO:0045542">
    <property type="term" value="P:positive regulation of cholesterol biosynthetic process"/>
    <property type="evidence" value="ECO:0007669"/>
    <property type="project" value="Ensembl"/>
</dbReference>
<dbReference type="GO" id="GO:0010875">
    <property type="term" value="P:positive regulation of cholesterol efflux"/>
    <property type="evidence" value="ECO:0007669"/>
    <property type="project" value="Ensembl"/>
</dbReference>
<dbReference type="GO" id="GO:0006355">
    <property type="term" value="P:regulation of DNA-templated transcription"/>
    <property type="evidence" value="ECO:0007669"/>
    <property type="project" value="Ensembl"/>
</dbReference>
<dbReference type="GO" id="GO:0055085">
    <property type="term" value="P:transmembrane transport"/>
    <property type="evidence" value="ECO:0000318"/>
    <property type="project" value="GO_Central"/>
</dbReference>
<dbReference type="CDD" id="cd03213">
    <property type="entry name" value="ABCG_EPDR"/>
    <property type="match status" value="1"/>
</dbReference>
<dbReference type="FunFam" id="3.40.50.300:FF:000267">
    <property type="entry name" value="ATP-binding cassette, sub-family G (WHITE), member 1"/>
    <property type="match status" value="1"/>
</dbReference>
<dbReference type="Gene3D" id="3.40.50.300">
    <property type="entry name" value="P-loop containing nucleotide triphosphate hydrolases"/>
    <property type="match status" value="1"/>
</dbReference>
<dbReference type="InterPro" id="IPR003593">
    <property type="entry name" value="AAA+_ATPase"/>
</dbReference>
<dbReference type="InterPro" id="IPR013525">
    <property type="entry name" value="ABC2_TM"/>
</dbReference>
<dbReference type="InterPro" id="IPR003439">
    <property type="entry name" value="ABC_transporter-like_ATP-bd"/>
</dbReference>
<dbReference type="InterPro" id="IPR017871">
    <property type="entry name" value="ABC_transporter-like_CS"/>
</dbReference>
<dbReference type="InterPro" id="IPR043926">
    <property type="entry name" value="ABCG_dom"/>
</dbReference>
<dbReference type="InterPro" id="IPR050352">
    <property type="entry name" value="ABCG_transporters"/>
</dbReference>
<dbReference type="InterPro" id="IPR027417">
    <property type="entry name" value="P-loop_NTPase"/>
</dbReference>
<dbReference type="PANTHER" id="PTHR48041">
    <property type="entry name" value="ABC TRANSPORTER G FAMILY MEMBER 28"/>
    <property type="match status" value="1"/>
</dbReference>
<dbReference type="PANTHER" id="PTHR48041:SF75">
    <property type="entry name" value="ATP-BINDING CASSETTE SUB-FAMILY G MEMBER 4"/>
    <property type="match status" value="1"/>
</dbReference>
<dbReference type="Pfam" id="PF01061">
    <property type="entry name" value="ABC2_membrane"/>
    <property type="match status" value="1"/>
</dbReference>
<dbReference type="Pfam" id="PF19055">
    <property type="entry name" value="ABC2_membrane_7"/>
    <property type="match status" value="1"/>
</dbReference>
<dbReference type="Pfam" id="PF00005">
    <property type="entry name" value="ABC_tran"/>
    <property type="match status" value="1"/>
</dbReference>
<dbReference type="SMART" id="SM00382">
    <property type="entry name" value="AAA"/>
    <property type="match status" value="1"/>
</dbReference>
<dbReference type="SUPFAM" id="SSF52540">
    <property type="entry name" value="P-loop containing nucleoside triphosphate hydrolases"/>
    <property type="match status" value="1"/>
</dbReference>
<dbReference type="PROSITE" id="PS00211">
    <property type="entry name" value="ABC_TRANSPORTER_1"/>
    <property type="match status" value="1"/>
</dbReference>
<dbReference type="PROSITE" id="PS50893">
    <property type="entry name" value="ABC_TRANSPORTER_2"/>
    <property type="match status" value="1"/>
</dbReference>
<name>ABCG4_HUMAN</name>
<accession>Q9H172</accession>
<accession>A8K1B5</accession>
<accession>Q8WWH0</accession>
<accession>Q8WWH1</accession>
<accession>Q8WWH2</accession>
<evidence type="ECO:0000250" key="1">
    <source>
        <dbReference type="UniProtKB" id="Q91WA9"/>
    </source>
</evidence>
<evidence type="ECO:0000255" key="2"/>
<evidence type="ECO:0000255" key="3">
    <source>
        <dbReference type="PROSITE-ProRule" id="PRU00434"/>
    </source>
</evidence>
<evidence type="ECO:0000269" key="4">
    <source>
    </source>
</evidence>
<evidence type="ECO:0000269" key="5">
    <source>
    </source>
</evidence>
<evidence type="ECO:0000269" key="6">
    <source>
    </source>
</evidence>
<evidence type="ECO:0000269" key="7">
    <source>
    </source>
</evidence>
<evidence type="ECO:0000269" key="8">
    <source>
    </source>
</evidence>
<evidence type="ECO:0000269" key="9">
    <source>
    </source>
</evidence>
<evidence type="ECO:0000303" key="10">
    <source>
    </source>
</evidence>
<evidence type="ECO:0000305" key="11"/>
<evidence type="ECO:0000305" key="12">
    <source>
    </source>
</evidence>
<evidence type="ECO:0000305" key="13">
    <source>
    </source>
</evidence>
<evidence type="ECO:0000312" key="14">
    <source>
        <dbReference type="HGNC" id="HGNC:13884"/>
    </source>
</evidence>